<feature type="chain" id="PRO_0000058486" description="Proline-rich nuclear receptor coactivator 2">
    <location>
        <begin position="1"/>
        <end position="140"/>
    </location>
</feature>
<feature type="region of interest" description="Disordered" evidence="3">
    <location>
        <begin position="1"/>
        <end position="81"/>
    </location>
</feature>
<feature type="short sequence motif" description="SH3-binding">
    <location>
        <begin position="100"/>
        <end position="106"/>
    </location>
</feature>
<feature type="compositionally biased region" description="Polar residues" evidence="3">
    <location>
        <begin position="11"/>
        <end position="38"/>
    </location>
</feature>
<feature type="compositionally biased region" description="Polar residues" evidence="3">
    <location>
        <begin position="59"/>
        <end position="81"/>
    </location>
</feature>
<feature type="sequence conflict" description="In Ref. 1; BAB31186." evidence="6" ref="1">
    <original>K</original>
    <variation>Q</variation>
    <location>
        <position position="98"/>
    </location>
</feature>
<proteinExistence type="evidence at transcript level"/>
<dbReference type="EMBL" id="AK011192">
    <property type="protein sequence ID" value="BAB27457.1"/>
    <property type="molecule type" value="mRNA"/>
</dbReference>
<dbReference type="EMBL" id="AK012073">
    <property type="protein sequence ID" value="BAB28010.1"/>
    <property type="molecule type" value="mRNA"/>
</dbReference>
<dbReference type="EMBL" id="AK013163">
    <property type="protein sequence ID" value="BAB28686.1"/>
    <property type="molecule type" value="mRNA"/>
</dbReference>
<dbReference type="EMBL" id="AK018384">
    <property type="protein sequence ID" value="BAB31186.1"/>
    <property type="molecule type" value="mRNA"/>
</dbReference>
<dbReference type="EMBL" id="AK075816">
    <property type="protein sequence ID" value="BAC35983.1"/>
    <property type="molecule type" value="mRNA"/>
</dbReference>
<dbReference type="EMBL" id="AK077403">
    <property type="protein sequence ID" value="BAC36786.1"/>
    <property type="molecule type" value="mRNA"/>
</dbReference>
<dbReference type="EMBL" id="AL672076">
    <property type="protein sequence ID" value="CAM15896.1"/>
    <property type="molecule type" value="Genomic_DNA"/>
</dbReference>
<dbReference type="EMBL" id="AL672076">
    <property type="protein sequence ID" value="CAM15897.1"/>
    <property type="status" value="ALT_SEQ"/>
    <property type="molecule type" value="Genomic_DNA"/>
</dbReference>
<dbReference type="EMBL" id="CH466552">
    <property type="protein sequence ID" value="EDL29966.1"/>
    <property type="molecule type" value="Genomic_DNA"/>
</dbReference>
<dbReference type="EMBL" id="BC006598">
    <property type="protein sequence ID" value="AAH06598.1"/>
    <property type="molecule type" value="mRNA"/>
</dbReference>
<dbReference type="CCDS" id="CCDS18792.1"/>
<dbReference type="RefSeq" id="NP_080659.1">
    <property type="nucleotide sequence ID" value="NM_026383.3"/>
</dbReference>
<dbReference type="RefSeq" id="XP_006539101.1">
    <property type="nucleotide sequence ID" value="XM_006539038.2"/>
</dbReference>
<dbReference type="RefSeq" id="XP_006539102.1">
    <property type="nucleotide sequence ID" value="XM_006539039.2"/>
</dbReference>
<dbReference type="FunCoup" id="Q9CR73">
    <property type="interactions" value="3040"/>
</dbReference>
<dbReference type="STRING" id="10090.ENSMUSP00000030436"/>
<dbReference type="iPTMnet" id="Q9CR73"/>
<dbReference type="PhosphoSitePlus" id="Q9CR73"/>
<dbReference type="PaxDb" id="10090-ENSMUSP00000030436"/>
<dbReference type="ProteomicsDB" id="289467"/>
<dbReference type="Antibodypedia" id="49958">
    <property type="antibodies" value="102 antibodies from 20 providers"/>
</dbReference>
<dbReference type="DNASU" id="52830"/>
<dbReference type="Ensembl" id="ENSMUST00000030436.12">
    <property type="protein sequence ID" value="ENSMUSP00000030436.6"/>
    <property type="gene ID" value="ENSMUSG00000028675.13"/>
</dbReference>
<dbReference type="GeneID" id="52830"/>
<dbReference type="KEGG" id="mmu:52830"/>
<dbReference type="UCSC" id="uc008vhf.2">
    <property type="organism name" value="mouse"/>
</dbReference>
<dbReference type="AGR" id="MGI:106512"/>
<dbReference type="CTD" id="55629"/>
<dbReference type="MGI" id="MGI:106512">
    <property type="gene designation" value="Pnrc2"/>
</dbReference>
<dbReference type="VEuPathDB" id="HostDB:ENSMUSG00000028675"/>
<dbReference type="eggNOG" id="ENOG502RZZX">
    <property type="taxonomic scope" value="Eukaryota"/>
</dbReference>
<dbReference type="GeneTree" id="ENSGT00530000063881"/>
<dbReference type="HOGENOM" id="CLU_086541_1_0_1"/>
<dbReference type="InParanoid" id="Q9CR73"/>
<dbReference type="OMA" id="RNTTKNH"/>
<dbReference type="OrthoDB" id="8732832at2759"/>
<dbReference type="PhylomeDB" id="Q9CR73"/>
<dbReference type="Reactome" id="R-MMU-975957">
    <property type="pathway name" value="Nonsense Mediated Decay (NMD) enhanced by the Exon Junction Complex (EJC)"/>
</dbReference>
<dbReference type="BioGRID-ORCS" id="52830">
    <property type="hits" value="3 hits in 76 CRISPR screens"/>
</dbReference>
<dbReference type="ChiTaRS" id="Pnrc2">
    <property type="organism name" value="mouse"/>
</dbReference>
<dbReference type="PRO" id="PR:Q9CR73"/>
<dbReference type="Proteomes" id="UP000000589">
    <property type="component" value="Chromosome 4"/>
</dbReference>
<dbReference type="RNAct" id="Q9CR73">
    <property type="molecule type" value="protein"/>
</dbReference>
<dbReference type="Bgee" id="ENSMUSG00000028675">
    <property type="expression patterns" value="Expressed in optic fissure and 269 other cell types or tissues"/>
</dbReference>
<dbReference type="ExpressionAtlas" id="Q9CR73">
    <property type="expression patterns" value="baseline and differential"/>
</dbReference>
<dbReference type="GO" id="GO:0005794">
    <property type="term" value="C:Golgi apparatus"/>
    <property type="evidence" value="ECO:0007669"/>
    <property type="project" value="Ensembl"/>
</dbReference>
<dbReference type="GO" id="GO:0005654">
    <property type="term" value="C:nucleoplasm"/>
    <property type="evidence" value="ECO:0007669"/>
    <property type="project" value="Ensembl"/>
</dbReference>
<dbReference type="GO" id="GO:0005634">
    <property type="term" value="C:nucleus"/>
    <property type="evidence" value="ECO:0000250"/>
    <property type="project" value="UniProtKB"/>
</dbReference>
<dbReference type="GO" id="GO:0000932">
    <property type="term" value="C:P-body"/>
    <property type="evidence" value="ECO:0000250"/>
    <property type="project" value="UniProtKB"/>
</dbReference>
<dbReference type="GO" id="GO:0000184">
    <property type="term" value="P:nuclear-transcribed mRNA catabolic process, nonsense-mediated decay"/>
    <property type="evidence" value="ECO:0000250"/>
    <property type="project" value="UniProtKB"/>
</dbReference>
<dbReference type="InterPro" id="IPR028322">
    <property type="entry name" value="PNRC-like_rgn"/>
</dbReference>
<dbReference type="InterPro" id="IPR026780">
    <property type="entry name" value="PNRC1/2"/>
</dbReference>
<dbReference type="PANTHER" id="PTHR15405">
    <property type="entry name" value="PROLINE-RICH NUCLEAR RECEPTOR COACTIVATOR"/>
    <property type="match status" value="1"/>
</dbReference>
<dbReference type="Pfam" id="PF15365">
    <property type="entry name" value="PNRC"/>
    <property type="match status" value="1"/>
</dbReference>
<name>PNRC2_MOUSE</name>
<reference key="1">
    <citation type="journal article" date="2005" name="Science">
        <title>The transcriptional landscape of the mammalian genome.</title>
        <authorList>
            <person name="Carninci P."/>
            <person name="Kasukawa T."/>
            <person name="Katayama S."/>
            <person name="Gough J."/>
            <person name="Frith M.C."/>
            <person name="Maeda N."/>
            <person name="Oyama R."/>
            <person name="Ravasi T."/>
            <person name="Lenhard B."/>
            <person name="Wells C."/>
            <person name="Kodzius R."/>
            <person name="Shimokawa K."/>
            <person name="Bajic V.B."/>
            <person name="Brenner S.E."/>
            <person name="Batalov S."/>
            <person name="Forrest A.R."/>
            <person name="Zavolan M."/>
            <person name="Davis M.J."/>
            <person name="Wilming L.G."/>
            <person name="Aidinis V."/>
            <person name="Allen J.E."/>
            <person name="Ambesi-Impiombato A."/>
            <person name="Apweiler R."/>
            <person name="Aturaliya R.N."/>
            <person name="Bailey T.L."/>
            <person name="Bansal M."/>
            <person name="Baxter L."/>
            <person name="Beisel K.W."/>
            <person name="Bersano T."/>
            <person name="Bono H."/>
            <person name="Chalk A.M."/>
            <person name="Chiu K.P."/>
            <person name="Choudhary V."/>
            <person name="Christoffels A."/>
            <person name="Clutterbuck D.R."/>
            <person name="Crowe M.L."/>
            <person name="Dalla E."/>
            <person name="Dalrymple B.P."/>
            <person name="de Bono B."/>
            <person name="Della Gatta G."/>
            <person name="di Bernardo D."/>
            <person name="Down T."/>
            <person name="Engstrom P."/>
            <person name="Fagiolini M."/>
            <person name="Faulkner G."/>
            <person name="Fletcher C.F."/>
            <person name="Fukushima T."/>
            <person name="Furuno M."/>
            <person name="Futaki S."/>
            <person name="Gariboldi M."/>
            <person name="Georgii-Hemming P."/>
            <person name="Gingeras T.R."/>
            <person name="Gojobori T."/>
            <person name="Green R.E."/>
            <person name="Gustincich S."/>
            <person name="Harbers M."/>
            <person name="Hayashi Y."/>
            <person name="Hensch T.K."/>
            <person name="Hirokawa N."/>
            <person name="Hill D."/>
            <person name="Huminiecki L."/>
            <person name="Iacono M."/>
            <person name="Ikeo K."/>
            <person name="Iwama A."/>
            <person name="Ishikawa T."/>
            <person name="Jakt M."/>
            <person name="Kanapin A."/>
            <person name="Katoh M."/>
            <person name="Kawasawa Y."/>
            <person name="Kelso J."/>
            <person name="Kitamura H."/>
            <person name="Kitano H."/>
            <person name="Kollias G."/>
            <person name="Krishnan S.P."/>
            <person name="Kruger A."/>
            <person name="Kummerfeld S.K."/>
            <person name="Kurochkin I.V."/>
            <person name="Lareau L.F."/>
            <person name="Lazarevic D."/>
            <person name="Lipovich L."/>
            <person name="Liu J."/>
            <person name="Liuni S."/>
            <person name="McWilliam S."/>
            <person name="Madan Babu M."/>
            <person name="Madera M."/>
            <person name="Marchionni L."/>
            <person name="Matsuda H."/>
            <person name="Matsuzawa S."/>
            <person name="Miki H."/>
            <person name="Mignone F."/>
            <person name="Miyake S."/>
            <person name="Morris K."/>
            <person name="Mottagui-Tabar S."/>
            <person name="Mulder N."/>
            <person name="Nakano N."/>
            <person name="Nakauchi H."/>
            <person name="Ng P."/>
            <person name="Nilsson R."/>
            <person name="Nishiguchi S."/>
            <person name="Nishikawa S."/>
            <person name="Nori F."/>
            <person name="Ohara O."/>
            <person name="Okazaki Y."/>
            <person name="Orlando V."/>
            <person name="Pang K.C."/>
            <person name="Pavan W.J."/>
            <person name="Pavesi G."/>
            <person name="Pesole G."/>
            <person name="Petrovsky N."/>
            <person name="Piazza S."/>
            <person name="Reed J."/>
            <person name="Reid J.F."/>
            <person name="Ring B.Z."/>
            <person name="Ringwald M."/>
            <person name="Rost B."/>
            <person name="Ruan Y."/>
            <person name="Salzberg S.L."/>
            <person name="Sandelin A."/>
            <person name="Schneider C."/>
            <person name="Schoenbach C."/>
            <person name="Sekiguchi K."/>
            <person name="Semple C.A."/>
            <person name="Seno S."/>
            <person name="Sessa L."/>
            <person name="Sheng Y."/>
            <person name="Shibata Y."/>
            <person name="Shimada H."/>
            <person name="Shimada K."/>
            <person name="Silva D."/>
            <person name="Sinclair B."/>
            <person name="Sperling S."/>
            <person name="Stupka E."/>
            <person name="Sugiura K."/>
            <person name="Sultana R."/>
            <person name="Takenaka Y."/>
            <person name="Taki K."/>
            <person name="Tammoja K."/>
            <person name="Tan S.L."/>
            <person name="Tang S."/>
            <person name="Taylor M.S."/>
            <person name="Tegner J."/>
            <person name="Teichmann S.A."/>
            <person name="Ueda H.R."/>
            <person name="van Nimwegen E."/>
            <person name="Verardo R."/>
            <person name="Wei C.L."/>
            <person name="Yagi K."/>
            <person name="Yamanishi H."/>
            <person name="Zabarovsky E."/>
            <person name="Zhu S."/>
            <person name="Zimmer A."/>
            <person name="Hide W."/>
            <person name="Bult C."/>
            <person name="Grimmond S.M."/>
            <person name="Teasdale R.D."/>
            <person name="Liu E.T."/>
            <person name="Brusic V."/>
            <person name="Quackenbush J."/>
            <person name="Wahlestedt C."/>
            <person name="Mattick J.S."/>
            <person name="Hume D.A."/>
            <person name="Kai C."/>
            <person name="Sasaki D."/>
            <person name="Tomaru Y."/>
            <person name="Fukuda S."/>
            <person name="Kanamori-Katayama M."/>
            <person name="Suzuki M."/>
            <person name="Aoki J."/>
            <person name="Arakawa T."/>
            <person name="Iida J."/>
            <person name="Imamura K."/>
            <person name="Itoh M."/>
            <person name="Kato T."/>
            <person name="Kawaji H."/>
            <person name="Kawagashira N."/>
            <person name="Kawashima T."/>
            <person name="Kojima M."/>
            <person name="Kondo S."/>
            <person name="Konno H."/>
            <person name="Nakano K."/>
            <person name="Ninomiya N."/>
            <person name="Nishio T."/>
            <person name="Okada M."/>
            <person name="Plessy C."/>
            <person name="Shibata K."/>
            <person name="Shiraki T."/>
            <person name="Suzuki S."/>
            <person name="Tagami M."/>
            <person name="Waki K."/>
            <person name="Watahiki A."/>
            <person name="Okamura-Oho Y."/>
            <person name="Suzuki H."/>
            <person name="Kawai J."/>
            <person name="Hayashizaki Y."/>
        </authorList>
    </citation>
    <scope>NUCLEOTIDE SEQUENCE [LARGE SCALE MRNA]</scope>
    <source>
        <strain>C57BL/6J</strain>
        <tissue>Embryo</tissue>
        <tissue>Head</tissue>
        <tissue>Lung</tissue>
        <tissue>Small intestine</tissue>
    </source>
</reference>
<reference key="2">
    <citation type="journal article" date="2009" name="PLoS Biol.">
        <title>Lineage-specific biology revealed by a finished genome assembly of the mouse.</title>
        <authorList>
            <person name="Church D.M."/>
            <person name="Goodstadt L."/>
            <person name="Hillier L.W."/>
            <person name="Zody M.C."/>
            <person name="Goldstein S."/>
            <person name="She X."/>
            <person name="Bult C.J."/>
            <person name="Agarwala R."/>
            <person name="Cherry J.L."/>
            <person name="DiCuccio M."/>
            <person name="Hlavina W."/>
            <person name="Kapustin Y."/>
            <person name="Meric P."/>
            <person name="Maglott D."/>
            <person name="Birtle Z."/>
            <person name="Marques A.C."/>
            <person name="Graves T."/>
            <person name="Zhou S."/>
            <person name="Teague B."/>
            <person name="Potamousis K."/>
            <person name="Churas C."/>
            <person name="Place M."/>
            <person name="Herschleb J."/>
            <person name="Runnheim R."/>
            <person name="Forrest D."/>
            <person name="Amos-Landgraf J."/>
            <person name="Schwartz D.C."/>
            <person name="Cheng Z."/>
            <person name="Lindblad-Toh K."/>
            <person name="Eichler E.E."/>
            <person name="Ponting C.P."/>
        </authorList>
    </citation>
    <scope>NUCLEOTIDE SEQUENCE [LARGE SCALE GENOMIC DNA]</scope>
    <source>
        <strain>C57BL/6J</strain>
    </source>
</reference>
<reference key="3">
    <citation type="submission" date="2005-09" db="EMBL/GenBank/DDBJ databases">
        <authorList>
            <person name="Mural R.J."/>
            <person name="Adams M.D."/>
            <person name="Myers E.W."/>
            <person name="Smith H.O."/>
            <person name="Venter J.C."/>
        </authorList>
    </citation>
    <scope>NUCLEOTIDE SEQUENCE [LARGE SCALE GENOMIC DNA]</scope>
</reference>
<reference key="4">
    <citation type="journal article" date="2004" name="Genome Res.">
        <title>The status, quality, and expansion of the NIH full-length cDNA project: the Mammalian Gene Collection (MGC).</title>
        <authorList>
            <consortium name="The MGC Project Team"/>
        </authorList>
    </citation>
    <scope>NUCLEOTIDE SEQUENCE [LARGE SCALE MRNA]</scope>
    <source>
        <strain>FVB/N</strain>
        <tissue>Mammary tumor</tissue>
    </source>
</reference>
<reference key="5">
    <citation type="journal article" date="2005" name="Gene">
        <title>Transcriptional regulation of the mouse PNRC2 promoter by the nuclear factor Y (NFY) and E2F1.</title>
        <authorList>
            <person name="Zhou D."/>
            <person name="Masri S."/>
            <person name="Ye J.J."/>
            <person name="Chen S."/>
        </authorList>
    </citation>
    <scope>TISSUE SPECIFICITY</scope>
</reference>
<reference key="6">
    <citation type="journal article" date="2008" name="J. Biol. Chem.">
        <title>Nuclear receptor coactivator PNRC2 regulates energy expenditure and adiposity.</title>
        <authorList>
            <person name="Zhou D."/>
            <person name="Shen R."/>
            <person name="Ye J.J."/>
            <person name="Li Y."/>
            <person name="Tsark W."/>
            <person name="Isbell D."/>
            <person name="Tso P."/>
            <person name="Chen S."/>
        </authorList>
    </citation>
    <scope>FUNCTION</scope>
    <scope>DISRUPTION PHENOTYPE</scope>
</reference>
<accession>Q9CR73</accession>
<accession>B1AV48</accession>
<accession>B1AV49</accession>
<accession>Q9CXC6</accession>
<comment type="function">
    <text evidence="2 5">Involved in nonsense-mediated mRNA decay (NMD) by acting as a bridge between the mRNA decapping complex and the NMD machinery (By similarity). May act by targeting the NMD machinery to the P-body and recruiting the decapping machinery to aberrant mRNAs (By similarity). Required for UPF1/RENT1 localization to the P-body (By similarity). Plays a role in glucocorticoid receptor-mediated mRNA degradation by interacting with the glucocorticoid receptor NR3C1 in a ligand-dependent manner when it is bound to the 5' UTR of target mRNAs and recruiting the RNA helicase UPF1 and the mRNA-decapping enzyme DCP1A, leading to RNA decay (By similarity). Also acts as a nuclear receptor coactivator. May play a role in controlling the energy balance between energy storage and energy expenditure (PubMed:17971453).</text>
</comment>
<comment type="subunit">
    <text evidence="2">Interacts with UPF1/RENT1; preferentially interacts with hyperphosphorylated form. Interacts with DCP1A. Interacts with many nuclear receptors including ESR1, ESRRA, ESRRG, NR3C1/GR, NR5A1, PGR, TR, RAR and RXR.</text>
</comment>
<comment type="subcellular location">
    <subcellularLocation>
        <location evidence="1">Nucleus</location>
    </subcellularLocation>
    <subcellularLocation>
        <location evidence="1">Cytoplasm</location>
        <location evidence="1">P-body</location>
    </subcellularLocation>
</comment>
<comment type="tissue specificity">
    <text evidence="4">Strong expression is detected in lung, spleen, ovary, thymus, and colon.</text>
</comment>
<comment type="domain">
    <text evidence="1">The interaction between PNRC2 and nuclear receptors is dependent on the SH3 binding motif.</text>
</comment>
<comment type="disruption phenotype">
    <text evidence="5">Mice are lean, resistant to high fat diet-induced obesity but without the induction of insulin resistance and have a higher metabolic rate than wild-type mice.</text>
</comment>
<comment type="similarity">
    <text evidence="6">Belongs to the PNRC family. PNRC2 subfamily.</text>
</comment>
<comment type="sequence caution" evidence="6">
    <conflict type="erroneous gene model prediction">
        <sequence resource="EMBL-CDS" id="CAM15897"/>
    </conflict>
</comment>
<sequence length="140" mass="15401">MGGGERYNIPDPQSRNASKNQEQQNRQKSKDQNSSQTKIAHKKKERGHGYNPAAAAWQAMQNGGKTKSLSNNSNWNAGLSSPSLLFKSQASQNYAGAKFSEPPSPSVLPKPPSHWVHVSLNPSDKETMTFQLKTLLKVQV</sequence>
<organism>
    <name type="scientific">Mus musculus</name>
    <name type="common">Mouse</name>
    <dbReference type="NCBI Taxonomy" id="10090"/>
    <lineage>
        <taxon>Eukaryota</taxon>
        <taxon>Metazoa</taxon>
        <taxon>Chordata</taxon>
        <taxon>Craniata</taxon>
        <taxon>Vertebrata</taxon>
        <taxon>Euteleostomi</taxon>
        <taxon>Mammalia</taxon>
        <taxon>Eutheria</taxon>
        <taxon>Euarchontoglires</taxon>
        <taxon>Glires</taxon>
        <taxon>Rodentia</taxon>
        <taxon>Myomorpha</taxon>
        <taxon>Muroidea</taxon>
        <taxon>Muridae</taxon>
        <taxon>Murinae</taxon>
        <taxon>Mus</taxon>
        <taxon>Mus</taxon>
    </lineage>
</organism>
<evidence type="ECO:0000250" key="1"/>
<evidence type="ECO:0000250" key="2">
    <source>
        <dbReference type="UniProtKB" id="Q9NPJ4"/>
    </source>
</evidence>
<evidence type="ECO:0000256" key="3">
    <source>
        <dbReference type="SAM" id="MobiDB-lite"/>
    </source>
</evidence>
<evidence type="ECO:0000269" key="4">
    <source>
    </source>
</evidence>
<evidence type="ECO:0000269" key="5">
    <source>
    </source>
</evidence>
<evidence type="ECO:0000305" key="6"/>
<gene>
    <name type="primary">Pnrc2</name>
</gene>
<protein>
    <recommendedName>
        <fullName>Proline-rich nuclear receptor coactivator 2</fullName>
    </recommendedName>
</protein>
<keyword id="KW-0010">Activator</keyword>
<keyword id="KW-0963">Cytoplasm</keyword>
<keyword id="KW-0866">Nonsense-mediated mRNA decay</keyword>
<keyword id="KW-0539">Nucleus</keyword>
<keyword id="KW-1185">Reference proteome</keyword>
<keyword id="KW-0804">Transcription</keyword>
<keyword id="KW-0805">Transcription regulation</keyword>